<dbReference type="EC" id="2.7.11.24" evidence="3"/>
<dbReference type="EMBL" id="AF003597">
    <property type="protein sequence ID" value="AAC36131.1"/>
    <property type="molecule type" value="mRNA"/>
</dbReference>
<dbReference type="RefSeq" id="NP_001003206.1">
    <property type="nucleotide sequence ID" value="NM_001003206.1"/>
</dbReference>
<dbReference type="BMRB" id="O02812"/>
<dbReference type="SMR" id="O02812"/>
<dbReference type="FunCoup" id="O02812">
    <property type="interactions" value="2031"/>
</dbReference>
<dbReference type="STRING" id="9615.ENSCAFP00000048255"/>
<dbReference type="PaxDb" id="9612-ENSCAFP00000001968"/>
<dbReference type="Ensembl" id="ENSCAFT00030024192.1">
    <property type="protein sequence ID" value="ENSCAFP00030021097.1"/>
    <property type="gene ID" value="ENSCAFG00030012850.1"/>
</dbReference>
<dbReference type="Ensembl" id="ENSCAFT00040032600.1">
    <property type="protein sequence ID" value="ENSCAFP00040028369.1"/>
    <property type="gene ID" value="ENSCAFG00040017597.1"/>
</dbReference>
<dbReference type="Ensembl" id="ENSCAFT00845014574.1">
    <property type="protein sequence ID" value="ENSCAFP00845011291.1"/>
    <property type="gene ID" value="ENSCAFG00845008249.1"/>
</dbReference>
<dbReference type="GeneID" id="403856"/>
<dbReference type="KEGG" id="cfa:403856"/>
<dbReference type="CTD" id="1432"/>
<dbReference type="VEuPathDB" id="HostDB:ENSCAFG00845008249"/>
<dbReference type="eggNOG" id="KOG0660">
    <property type="taxonomic scope" value="Eukaryota"/>
</dbReference>
<dbReference type="GeneTree" id="ENSGT00940000155325"/>
<dbReference type="HOGENOM" id="CLU_000288_181_1_1"/>
<dbReference type="InParanoid" id="O02812"/>
<dbReference type="OMA" id="NRYTDLN"/>
<dbReference type="OrthoDB" id="192887at2759"/>
<dbReference type="TreeFam" id="TF105100"/>
<dbReference type="Reactome" id="R-CFA-168638">
    <property type="pathway name" value="NOD1/2 Signaling Pathway"/>
</dbReference>
<dbReference type="Reactome" id="R-CFA-198753">
    <property type="pathway name" value="ERK/MAPK targets"/>
</dbReference>
<dbReference type="Reactome" id="R-CFA-418592">
    <property type="pathway name" value="ADP signalling through P2Y purinoceptor 1"/>
</dbReference>
<dbReference type="Reactome" id="R-CFA-432142">
    <property type="pathway name" value="Platelet sensitization by LDL"/>
</dbReference>
<dbReference type="Reactome" id="R-CFA-4420097">
    <property type="pathway name" value="VEGFA-VEGFR2 Pathway"/>
</dbReference>
<dbReference type="Reactome" id="R-CFA-450341">
    <property type="pathway name" value="Activation of the AP-1 family of transcription factors"/>
</dbReference>
<dbReference type="Reactome" id="R-CFA-525793">
    <property type="pathway name" value="Myogenesis"/>
</dbReference>
<dbReference type="Reactome" id="R-CFA-5668599">
    <property type="pathway name" value="RHO GTPases Activate NADPH Oxidases"/>
</dbReference>
<dbReference type="Reactome" id="R-CFA-6798695">
    <property type="pathway name" value="Neutrophil degranulation"/>
</dbReference>
<dbReference type="Reactome" id="R-CFA-9824585">
    <property type="pathway name" value="Regulation of MITF-M-dependent genes involved in pigmentation"/>
</dbReference>
<dbReference type="Proteomes" id="UP000002254">
    <property type="component" value="Unplaced"/>
</dbReference>
<dbReference type="Proteomes" id="UP000694429">
    <property type="component" value="Chromosome 12"/>
</dbReference>
<dbReference type="Proteomes" id="UP000694542">
    <property type="component" value="Chromosome 12"/>
</dbReference>
<dbReference type="Proteomes" id="UP000805418">
    <property type="component" value="Chromosome 12"/>
</dbReference>
<dbReference type="Bgee" id="ENSCAFG00000001378">
    <property type="expression patterns" value="Expressed in granulocyte and 45 other cell types or tissues"/>
</dbReference>
<dbReference type="GO" id="GO:0005737">
    <property type="term" value="C:cytoplasm"/>
    <property type="evidence" value="ECO:0000250"/>
    <property type="project" value="UniProtKB"/>
</dbReference>
<dbReference type="GO" id="GO:0005634">
    <property type="term" value="C:nucleus"/>
    <property type="evidence" value="ECO:0000250"/>
    <property type="project" value="UniProtKB"/>
</dbReference>
<dbReference type="GO" id="GO:0005524">
    <property type="term" value="F:ATP binding"/>
    <property type="evidence" value="ECO:0007669"/>
    <property type="project" value="UniProtKB-KW"/>
</dbReference>
<dbReference type="GO" id="GO:0004707">
    <property type="term" value="F:MAP kinase activity"/>
    <property type="evidence" value="ECO:0000250"/>
    <property type="project" value="UniProtKB"/>
</dbReference>
<dbReference type="GO" id="GO:0106310">
    <property type="term" value="F:protein serine kinase activity"/>
    <property type="evidence" value="ECO:0007669"/>
    <property type="project" value="RHEA"/>
</dbReference>
<dbReference type="GO" id="GO:0004674">
    <property type="term" value="F:protein serine/threonine kinase activity"/>
    <property type="evidence" value="ECO:0000318"/>
    <property type="project" value="GO_Central"/>
</dbReference>
<dbReference type="GO" id="GO:0006915">
    <property type="term" value="P:apoptotic process"/>
    <property type="evidence" value="ECO:0007669"/>
    <property type="project" value="UniProtKB-KW"/>
</dbReference>
<dbReference type="GO" id="GO:0048870">
    <property type="term" value="P:cell motility"/>
    <property type="evidence" value="ECO:0000304"/>
    <property type="project" value="AgBase"/>
</dbReference>
<dbReference type="GO" id="GO:0035556">
    <property type="term" value="P:intracellular signal transduction"/>
    <property type="evidence" value="ECO:0000250"/>
    <property type="project" value="UniProtKB"/>
</dbReference>
<dbReference type="GO" id="GO:0038066">
    <property type="term" value="P:p38MAPK cascade"/>
    <property type="evidence" value="ECO:0000250"/>
    <property type="project" value="UniProtKB"/>
</dbReference>
<dbReference type="GO" id="GO:0016310">
    <property type="term" value="P:phosphorylation"/>
    <property type="evidence" value="ECO:0000314"/>
    <property type="project" value="AgBase"/>
</dbReference>
<dbReference type="GO" id="GO:0051091">
    <property type="term" value="P:positive regulation of DNA-binding transcription factor activity"/>
    <property type="evidence" value="ECO:0000304"/>
    <property type="project" value="AgBase"/>
</dbReference>
<dbReference type="GO" id="GO:0045663">
    <property type="term" value="P:positive regulation of myoblast differentiation"/>
    <property type="evidence" value="ECO:0000250"/>
    <property type="project" value="UniProtKB"/>
</dbReference>
<dbReference type="GO" id="GO:1901741">
    <property type="term" value="P:positive regulation of myoblast fusion"/>
    <property type="evidence" value="ECO:0000250"/>
    <property type="project" value="UniProtKB"/>
</dbReference>
<dbReference type="GO" id="GO:0010831">
    <property type="term" value="P:positive regulation of myotube differentiation"/>
    <property type="evidence" value="ECO:0000250"/>
    <property type="project" value="UniProtKB"/>
</dbReference>
<dbReference type="GO" id="GO:0042327">
    <property type="term" value="P:positive regulation of phosphorylation"/>
    <property type="evidence" value="ECO:0000303"/>
    <property type="project" value="AgBase"/>
</dbReference>
<dbReference type="GO" id="GO:0006357">
    <property type="term" value="P:regulation of transcription by RNA polymerase II"/>
    <property type="evidence" value="ECO:0000250"/>
    <property type="project" value="UniProtKB"/>
</dbReference>
<dbReference type="GO" id="GO:0006939">
    <property type="term" value="P:smooth muscle contraction"/>
    <property type="evidence" value="ECO:0000304"/>
    <property type="project" value="AgBase"/>
</dbReference>
<dbReference type="CDD" id="cd07877">
    <property type="entry name" value="STKc_p38alpha"/>
    <property type="match status" value="1"/>
</dbReference>
<dbReference type="FunFam" id="1.10.510.10:FF:000063">
    <property type="entry name" value="Mitogen-activated protein kinase 14"/>
    <property type="match status" value="1"/>
</dbReference>
<dbReference type="FunFam" id="3.30.200.20:FF:000769">
    <property type="entry name" value="Mitogen-activated protein kinase 14"/>
    <property type="match status" value="1"/>
</dbReference>
<dbReference type="Gene3D" id="3.30.200.20">
    <property type="entry name" value="Phosphorylase Kinase, domain 1"/>
    <property type="match status" value="1"/>
</dbReference>
<dbReference type="Gene3D" id="1.10.510.10">
    <property type="entry name" value="Transferase(Phosphotransferase) domain 1"/>
    <property type="match status" value="1"/>
</dbReference>
<dbReference type="InterPro" id="IPR011009">
    <property type="entry name" value="Kinase-like_dom_sf"/>
</dbReference>
<dbReference type="InterPro" id="IPR050117">
    <property type="entry name" value="MAP_kinase"/>
</dbReference>
<dbReference type="InterPro" id="IPR003527">
    <property type="entry name" value="MAP_kinase_CS"/>
</dbReference>
<dbReference type="InterPro" id="IPR038784">
    <property type="entry name" value="MAPK14"/>
</dbReference>
<dbReference type="InterPro" id="IPR008352">
    <property type="entry name" value="MAPK_p38-like"/>
</dbReference>
<dbReference type="InterPro" id="IPR000719">
    <property type="entry name" value="Prot_kinase_dom"/>
</dbReference>
<dbReference type="InterPro" id="IPR017441">
    <property type="entry name" value="Protein_kinase_ATP_BS"/>
</dbReference>
<dbReference type="PANTHER" id="PTHR24055">
    <property type="entry name" value="MITOGEN-ACTIVATED PROTEIN KINASE"/>
    <property type="match status" value="1"/>
</dbReference>
<dbReference type="Pfam" id="PF00069">
    <property type="entry name" value="Pkinase"/>
    <property type="match status" value="1"/>
</dbReference>
<dbReference type="PRINTS" id="PR01773">
    <property type="entry name" value="P38MAPKINASE"/>
</dbReference>
<dbReference type="SMART" id="SM00220">
    <property type="entry name" value="S_TKc"/>
    <property type="match status" value="1"/>
</dbReference>
<dbReference type="SUPFAM" id="SSF56112">
    <property type="entry name" value="Protein kinase-like (PK-like)"/>
    <property type="match status" value="1"/>
</dbReference>
<dbReference type="PROSITE" id="PS01351">
    <property type="entry name" value="MAPK"/>
    <property type="match status" value="1"/>
</dbReference>
<dbReference type="PROSITE" id="PS00107">
    <property type="entry name" value="PROTEIN_KINASE_ATP"/>
    <property type="match status" value="1"/>
</dbReference>
<dbReference type="PROSITE" id="PS50011">
    <property type="entry name" value="PROTEIN_KINASE_DOM"/>
    <property type="match status" value="1"/>
</dbReference>
<keyword id="KW-0007">Acetylation</keyword>
<keyword id="KW-0053">Apoptosis</keyword>
<keyword id="KW-0067">ATP-binding</keyword>
<keyword id="KW-0963">Cytoplasm</keyword>
<keyword id="KW-0418">Kinase</keyword>
<keyword id="KW-0547">Nucleotide-binding</keyword>
<keyword id="KW-0539">Nucleus</keyword>
<keyword id="KW-0597">Phosphoprotein</keyword>
<keyword id="KW-1185">Reference proteome</keyword>
<keyword id="KW-0723">Serine/threonine-protein kinase</keyword>
<keyword id="KW-0346">Stress response</keyword>
<keyword id="KW-0804">Transcription</keyword>
<keyword id="KW-0805">Transcription regulation</keyword>
<keyword id="KW-0808">Transferase</keyword>
<keyword id="KW-0832">Ubl conjugation</keyword>
<name>MK14_CANLF</name>
<sequence length="360" mass="41265">MSQERPTFYRQELNKTIWEVPERYQNLSPVGSGAYGSVCAAFDTKTGLRVAVKKLSRPFQSIIHAKRTYRELRLLKHMKHENVIGLLDVFTPARSLEEFNDVYLVTHLMGADLNNIVKCQKLTDDHVQFLIYQILRGLKYIHSADIIHRDLKPSNLAVNEDCELKILDFGLARHTDDEMTGYVATRWYRAPEIMLNWMHYNQTVDIWSVGCIMAELLTGRTLFPGTDHIDQLKLILRLVGTPGADLLKKISSESARNYIQSLTQMPKMNFANVFIGANPLAVDLLEKMLVLDSDKRITAAQALAHAYFAQYHDPDDEPVADPYDQSFESRDLLIDEWKSLTYDEVVSFVPPPLDQEEMES</sequence>
<organism>
    <name type="scientific">Canis lupus familiaris</name>
    <name type="common">Dog</name>
    <name type="synonym">Canis familiaris</name>
    <dbReference type="NCBI Taxonomy" id="9615"/>
    <lineage>
        <taxon>Eukaryota</taxon>
        <taxon>Metazoa</taxon>
        <taxon>Chordata</taxon>
        <taxon>Craniata</taxon>
        <taxon>Vertebrata</taxon>
        <taxon>Euteleostomi</taxon>
        <taxon>Mammalia</taxon>
        <taxon>Eutheria</taxon>
        <taxon>Laurasiatheria</taxon>
        <taxon>Carnivora</taxon>
        <taxon>Caniformia</taxon>
        <taxon>Canidae</taxon>
        <taxon>Canis</taxon>
    </lineage>
</organism>
<feature type="initiator methionine" description="Removed" evidence="3">
    <location>
        <position position="1"/>
    </location>
</feature>
<feature type="chain" id="PRO_0000186290" description="Mitogen-activated protein kinase 14">
    <location>
        <begin position="2"/>
        <end position="360"/>
    </location>
</feature>
<feature type="domain" description="Protein kinase" evidence="4">
    <location>
        <begin position="24"/>
        <end position="308"/>
    </location>
</feature>
<feature type="short sequence motif" description="TXY">
    <location>
        <begin position="180"/>
        <end position="182"/>
    </location>
</feature>
<feature type="active site" description="Proton acceptor" evidence="4">
    <location>
        <position position="150"/>
    </location>
</feature>
<feature type="binding site" evidence="4">
    <location>
        <begin position="30"/>
        <end position="38"/>
    </location>
    <ligand>
        <name>ATP</name>
        <dbReference type="ChEBI" id="CHEBI:30616"/>
    </ligand>
</feature>
<feature type="binding site" evidence="4">
    <location>
        <position position="53"/>
    </location>
    <ligand>
        <name>ATP</name>
        <dbReference type="ChEBI" id="CHEBI:30616"/>
    </ligand>
</feature>
<feature type="modified residue" description="N-acetylserine" evidence="3">
    <location>
        <position position="2"/>
    </location>
</feature>
<feature type="modified residue" description="Phosphoserine" evidence="3">
    <location>
        <position position="2"/>
    </location>
</feature>
<feature type="modified residue" description="Phosphothreonine" evidence="3">
    <location>
        <position position="16"/>
    </location>
</feature>
<feature type="modified residue" description="N6-acetyllysine" evidence="3">
    <location>
        <position position="53"/>
    </location>
</feature>
<feature type="modified residue" description="N6-acetyllysine" evidence="3">
    <location>
        <position position="152"/>
    </location>
</feature>
<feature type="modified residue" description="Phosphothreonine; by MAP2K3, MAP2K4, MAP2K6 and autocatalysis" evidence="3">
    <location>
        <position position="180"/>
    </location>
</feature>
<feature type="modified residue" description="Phosphotyrosine; by MAP2K3, MAP2K4, MAP2K6 and autocatalysis" evidence="3">
    <location>
        <position position="182"/>
    </location>
</feature>
<feature type="modified residue" description="Phosphothreonine" evidence="3">
    <location>
        <position position="263"/>
    </location>
</feature>
<feature type="modified residue" description="Phosphotyrosine; by ZAP70" evidence="3">
    <location>
        <position position="323"/>
    </location>
</feature>
<evidence type="ECO:0000250" key="1"/>
<evidence type="ECO:0000250" key="2">
    <source>
        <dbReference type="UniProtKB" id="P47811"/>
    </source>
</evidence>
<evidence type="ECO:0000250" key="3">
    <source>
        <dbReference type="UniProtKB" id="Q16539"/>
    </source>
</evidence>
<evidence type="ECO:0000255" key="4">
    <source>
        <dbReference type="PROSITE-ProRule" id="PRU00159"/>
    </source>
</evidence>
<evidence type="ECO:0000305" key="5"/>
<accession>O02812</accession>
<comment type="function">
    <text evidence="3">Serine/threonine kinase which acts as an essential component of the MAP kinase signal transduction pathway. MAPK14 is one of the four p38 MAPKs which play an important role in the cascades of cellular responses evoked by extracellular stimuli such as pro-inflammatory cytokines or physical stress leading to direct activation of transcription factors. Accordingly, p38 MAPKs phosphorylate a broad range of proteins and it has been estimated that they may have approximately 200 to 300 substrates each. Some of the targets are downstream kinases which are activated through phosphorylation and further phosphorylate additional targets. RPS6KA5/MSK1 and RPS6KA4/MSK2 can directly phosphorylate and activate transcription factors such as CREB1, ATF1, the NF-kappa-B isoform RELA/NFKB3, STAT1 and STAT3, but can also phosphorylate histone H3 and the nucleosomal protein HMGN1. RPS6KA5/MSK1 and RPS6KA4/MSK2 play important roles in the rapid induction of immediate-early genes in response to stress or mitogenic stimuli, either by inducing chromatin remodeling or by recruiting the transcription machinery. On the other hand, two other kinase targets, MAPKAPK2/MK2 and MAPKAPK3/MK3, participate in the control of gene expression mostly at the post-transcriptional level, by phosphorylating ZFP36 (tristetraprolin) and ELAVL1, and by regulating EEF2K, which is important for the elongation of mRNA during translation. MKNK1/MNK1 and MKNK2/MNK2, two other kinases activated by p38 MAPKs, regulate protein synthesis by phosphorylating the initiation factor EIF4E2. MAPK14 also interacts with casein kinase II, leading to its activation through autophosphorylation and further phosphorylation of TP53/p53. In the cytoplasm, the p38 MAPK pathway is an important regulator of protein turnover. For example, CFLAR is an inhibitor of TNF-induced apoptosis whose proteasome-mediated degradation is regulated by p38 MAPK phosphorylation. In a similar way, MAPK14 phosphorylates the ubiquitin ligase SIAH2, regulating its activity towards EGLN3. MAPK14 may also inhibit the lysosomal degradation pathway of autophagy by interfering with the intracellular trafficking of the transmembrane protein ATG9. Another function of MAPK14 is to regulate the endocytosis of membrane receptors by different mechanisms that impinge on the small GTPase RAB5A. In addition, clathrin-mediated EGFR internalization induced by inflammatory cytokines and UV irradiation depends on MAPK14-mediated phosphorylation of EGFR itself as well as of RAB5A effectors. Ectodomain shedding of transmembrane proteins is regulated by p38 MAPKs as well. In response to inflammatory stimuli, p38 MAPKs phosphorylate the membrane-associated metalloprotease ADAM17. Such phosphorylation is required for ADAM17-mediated ectodomain shedding of TGF-alpha family ligands, which results in the activation of EGFR signaling and cell proliferation. Another p38 MAPK substrate is FGFR1. FGFR1 can be translocated from the extracellular space into the cytosol and nucleus of target cells, and regulates processes such as rRNA synthesis and cell growth. FGFR1 translocation requires p38 MAPK activation. In the nucleus, many transcription factors are phosphorylated and activated by p38 MAPKs in response to different stimuli. Classical examples include ATF1, ATF2, ATF6, ELK1, PTPRH, DDIT3, TP53/p53 and MEF2C and MEF2A. The p38 MAPKs are emerging as important modulators of gene expression by regulating chromatin modifiers and remodelers. The promoters of several genes involved in the inflammatory response, such as IL6, IL8 and IL12B, display a p38 MAPK-dependent enrichment of histone H3 phosphorylation on 'Ser-10' (H3S10ph) in LPS-stimulated myeloid cells. This phosphorylation enhances the accessibility of the cryptic NF-kappa-B-binding sites marking promoters for increased NF-kappa-B recruitment. Phosphorylates CDC25B and CDC25C which is required for binding to 14-3-3 proteins and leads to initiation of a G2 delay after ultraviolet radiation. Phosphorylates TIAR following DNA damage, releasing TIAR from GADD45A mRNA and preventing mRNA degradation. The p38 MAPKs may also have kinase-independent roles, which are thought to be due to the binding to targets in the absence of phosphorylation. Protein O-Glc-N-acylation catalyzed by the OGT is regulated by MAPK14, and, although OGT does not seem to be phosphorylated by MAPK14, their interaction increases upon MAPK14 activation induced by glucose deprivation. This interaction may regulate OGT activity by recruiting it to specific targets such as neurofilament H, stimulating its O-Glc-N-acylation. Required in mid-fetal development for the growth of embryo-derived blood vessels in the labyrinth layer of the placenta. Also plays an essential role in developmental and stress-induced erythropoiesis, through regulation of EPO gene expression (By similarity). Phosphorylates S100A9 at 'Thr-113' (By similarity).</text>
</comment>
<comment type="catalytic activity">
    <reaction evidence="3">
        <text>L-seryl-[protein] + ATP = O-phospho-L-seryl-[protein] + ADP + H(+)</text>
        <dbReference type="Rhea" id="RHEA:17989"/>
        <dbReference type="Rhea" id="RHEA-COMP:9863"/>
        <dbReference type="Rhea" id="RHEA-COMP:11604"/>
        <dbReference type="ChEBI" id="CHEBI:15378"/>
        <dbReference type="ChEBI" id="CHEBI:29999"/>
        <dbReference type="ChEBI" id="CHEBI:30616"/>
        <dbReference type="ChEBI" id="CHEBI:83421"/>
        <dbReference type="ChEBI" id="CHEBI:456216"/>
        <dbReference type="EC" id="2.7.11.24"/>
    </reaction>
</comment>
<comment type="catalytic activity">
    <reaction evidence="3">
        <text>L-threonyl-[protein] + ATP = O-phospho-L-threonyl-[protein] + ADP + H(+)</text>
        <dbReference type="Rhea" id="RHEA:46608"/>
        <dbReference type="Rhea" id="RHEA-COMP:11060"/>
        <dbReference type="Rhea" id="RHEA-COMP:11605"/>
        <dbReference type="ChEBI" id="CHEBI:15378"/>
        <dbReference type="ChEBI" id="CHEBI:30013"/>
        <dbReference type="ChEBI" id="CHEBI:30616"/>
        <dbReference type="ChEBI" id="CHEBI:61977"/>
        <dbReference type="ChEBI" id="CHEBI:456216"/>
        <dbReference type="EC" id="2.7.11.24"/>
    </reaction>
</comment>
<comment type="cofactor">
    <cofactor evidence="3">
        <name>Mg(2+)</name>
        <dbReference type="ChEBI" id="CHEBI:18420"/>
    </cofactor>
</comment>
<comment type="activity regulation">
    <text evidence="3">Activated by cell stresses such as DNA damage, heat shock, osmotic shock, anisomycin and sodium arsenite, as well as pro-inflammatory stimuli such as bacterial lipopolysaccharide (LPS) and interleukin-1. Activation occurs through dual phosphorylation of Thr-180 and Tyr-182 by either of two dual specificity kinases, MAP2K3/MKK3 or MAP2K6/MKK6, and potentially also MAP2K4/MKK4, as well as by TAB1-mediated autophosphorylation. MAPK14 phosphorylated on both Thr-180 and Tyr-182 is 10-20-fold more active than MAPK14 phosphorylated only on Thr-180, whereas MAPK14 phosphorylated on Tyr-182 alone is inactive. whereas Thr-180 is necessary for catalysis, Tyr-182 may be required for auto-activation and substrate recognition. Phosphorylated at Tyr-323 by ZAP70 in an alternative activation pathway in response to TCR signaling in T-cells. This alternative pathway is inhibited by GADD45A. Inhibited by dual specificity phosphatases, such as DUSP1, DUSP10, and DUSP16. Specifically inhibited by the binding of pyridinyl-imidazole compounds, which are cytokine-suppressive anti-inflammatory drugs (CSAID). SB203580 is an inhibitor of MAPK14 (By similarity).</text>
</comment>
<comment type="subunit">
    <text evidence="1 2 3">Component of a signaling complex containing at least AKAP13, PKN1, MAPK14, ZAK and MAP2K3. Within this complex, AKAP13 interacts directly with PKN1, which in turn recruits MAPK14, MAP2K3 and ZAK (By similarity). Binds to a kinase interaction motif within the protein tyrosine phosphatase, PTPRR (By similarity). This interaction retains MAPK14 in the cytoplasm and prevents nuclear accumulation (By similarity). Interacts with SPAG9 and GADD45A (By similarity). Interacts with CDC25B, CDC25C, DUSP1, DUSP10, DUSP16, NP60, SUPT20H and TAB1. Interacts with casein kinase II subunits CSNK2A1 and CSNK2B. Interacts with PPM1D. Interacts with CDK5RAP3; recruits PPM1D to MAPK14 and may regulate its dephosphorylation (By similarity). Interacts with DUSP2; this interaction does not lead to catalytic activation of DUSP2 and dephosphrylation of MAPK14 (By similarity).</text>
</comment>
<comment type="subcellular location">
    <subcellularLocation>
        <location evidence="3">Cytoplasm</location>
    </subcellularLocation>
    <subcellularLocation>
        <location evidence="3">Nucleus</location>
    </subcellularLocation>
</comment>
<comment type="domain">
    <text>The TXY motif contains the threonine and tyrosine residues whose phosphorylation activates the MAP kinases.</text>
</comment>
<comment type="PTM">
    <text evidence="1 3">Dually phosphorylated on Thr-180 and Tyr-182 by the MAP2Ks MAP2K3/MKK3, MAP2K4/MKK4 and MAP2K6/MKK6 in response to inflammatory citokines, environmental stress or growth factors, which activates the enzyme. Dual phosphorylation can also be mediated by TAB1-mediated autophosphorylation. TCR engagement in T-cells also leads to Tyr-323 phosphorylation by ZAP70. Dephosphorylated and inactivated by DUPS1, DUSP10 and DUSP16 (By similarity). PPM1D also mediates dephosphorylation and inactivation of MAPK14 (By similarity).</text>
</comment>
<comment type="PTM">
    <text evidence="3">Acetylated at Lys-53 and Lys-152 by KAT2B and EP300. Acetylation at Lys-53 increases the affinity for ATP and enhances kinase activity. Lys-53 and Lys-152 are deacetylated by HDAC3 (By similarity).</text>
</comment>
<comment type="PTM">
    <text evidence="3">Ubiquitinated. Ubiquitination leads to degradation by the proteasome pathway (By similarity).</text>
</comment>
<comment type="similarity">
    <text evidence="5">Belongs to the protein kinase superfamily. CMGC Ser/Thr protein kinase family. MAP kinase subfamily.</text>
</comment>
<proteinExistence type="evidence at transcript level"/>
<reference key="1">
    <citation type="journal article" date="1998" name="Am. J. Physiol.">
        <title>p38 mitogen-activated protein kinase expression and activation in smooth muscle.</title>
        <authorList>
            <person name="Hedges J.C."/>
            <person name="Yamboliev I.A."/>
            <person name="Ngo M."/>
            <person name="Horowitz B."/>
            <person name="Adam L.P."/>
            <person name="Gerthoffer W.T."/>
        </authorList>
    </citation>
    <scope>NUCLEOTIDE SEQUENCE [MRNA]</scope>
    <source>
        <tissue>Smooth muscle</tissue>
    </source>
</reference>
<protein>
    <recommendedName>
        <fullName evidence="2">Mitogen-activated protein kinase 14</fullName>
        <shortName>MAP kinase 14</shortName>
        <shortName>MAPK 14</shortName>
        <ecNumber evidence="3">2.7.11.24</ecNumber>
    </recommendedName>
    <alternativeName>
        <fullName>Mitogen-activated protein kinase p38 alpha</fullName>
        <shortName>MAP kinase p38 alpha</shortName>
    </alternativeName>
</protein>
<gene>
    <name evidence="2" type="primary">MAPK14</name>
    <name type="synonym">CSBP1</name>
    <name type="synonym">CSBP2</name>
</gene>